<feature type="chain" id="PRO_1000139426" description="CTP synthase">
    <location>
        <begin position="1"/>
        <end position="555"/>
    </location>
</feature>
<feature type="domain" description="Glutamine amidotransferase type-1" evidence="1">
    <location>
        <begin position="290"/>
        <end position="541"/>
    </location>
</feature>
<feature type="region of interest" description="Amidoligase domain" evidence="1">
    <location>
        <begin position="1"/>
        <end position="265"/>
    </location>
</feature>
<feature type="active site" description="Nucleophile; for glutamine hydrolysis" evidence="1">
    <location>
        <position position="378"/>
    </location>
</feature>
<feature type="active site" evidence="1">
    <location>
        <position position="514"/>
    </location>
</feature>
<feature type="active site" evidence="1">
    <location>
        <position position="516"/>
    </location>
</feature>
<feature type="binding site" evidence="1">
    <location>
        <position position="13"/>
    </location>
    <ligand>
        <name>CTP</name>
        <dbReference type="ChEBI" id="CHEBI:37563"/>
        <note>allosteric inhibitor</note>
    </ligand>
</feature>
<feature type="binding site" evidence="1">
    <location>
        <position position="13"/>
    </location>
    <ligand>
        <name>UTP</name>
        <dbReference type="ChEBI" id="CHEBI:46398"/>
    </ligand>
</feature>
<feature type="binding site" evidence="1">
    <location>
        <begin position="14"/>
        <end position="19"/>
    </location>
    <ligand>
        <name>ATP</name>
        <dbReference type="ChEBI" id="CHEBI:30616"/>
    </ligand>
</feature>
<feature type="binding site" evidence="1">
    <location>
        <position position="71"/>
    </location>
    <ligand>
        <name>ATP</name>
        <dbReference type="ChEBI" id="CHEBI:30616"/>
    </ligand>
</feature>
<feature type="binding site" evidence="1">
    <location>
        <position position="71"/>
    </location>
    <ligand>
        <name>Mg(2+)</name>
        <dbReference type="ChEBI" id="CHEBI:18420"/>
    </ligand>
</feature>
<feature type="binding site" evidence="1">
    <location>
        <position position="139"/>
    </location>
    <ligand>
        <name>Mg(2+)</name>
        <dbReference type="ChEBI" id="CHEBI:18420"/>
    </ligand>
</feature>
<feature type="binding site" evidence="1">
    <location>
        <begin position="146"/>
        <end position="148"/>
    </location>
    <ligand>
        <name>CTP</name>
        <dbReference type="ChEBI" id="CHEBI:37563"/>
        <note>allosteric inhibitor</note>
    </ligand>
</feature>
<feature type="binding site" evidence="1">
    <location>
        <begin position="186"/>
        <end position="191"/>
    </location>
    <ligand>
        <name>CTP</name>
        <dbReference type="ChEBI" id="CHEBI:37563"/>
        <note>allosteric inhibitor</note>
    </ligand>
</feature>
<feature type="binding site" evidence="1">
    <location>
        <begin position="186"/>
        <end position="191"/>
    </location>
    <ligand>
        <name>UTP</name>
        <dbReference type="ChEBI" id="CHEBI:46398"/>
    </ligand>
</feature>
<feature type="binding site" evidence="1">
    <location>
        <position position="222"/>
    </location>
    <ligand>
        <name>CTP</name>
        <dbReference type="ChEBI" id="CHEBI:37563"/>
        <note>allosteric inhibitor</note>
    </ligand>
</feature>
<feature type="binding site" evidence="1">
    <location>
        <position position="222"/>
    </location>
    <ligand>
        <name>UTP</name>
        <dbReference type="ChEBI" id="CHEBI:46398"/>
    </ligand>
</feature>
<feature type="binding site" evidence="1">
    <location>
        <position position="351"/>
    </location>
    <ligand>
        <name>L-glutamine</name>
        <dbReference type="ChEBI" id="CHEBI:58359"/>
    </ligand>
</feature>
<feature type="binding site" evidence="1">
    <location>
        <begin position="379"/>
        <end position="382"/>
    </location>
    <ligand>
        <name>L-glutamine</name>
        <dbReference type="ChEBI" id="CHEBI:58359"/>
    </ligand>
</feature>
<feature type="binding site" evidence="1">
    <location>
        <position position="402"/>
    </location>
    <ligand>
        <name>L-glutamine</name>
        <dbReference type="ChEBI" id="CHEBI:58359"/>
    </ligand>
</feature>
<feature type="binding site" evidence="1">
    <location>
        <position position="469"/>
    </location>
    <ligand>
        <name>L-glutamine</name>
        <dbReference type="ChEBI" id="CHEBI:58359"/>
    </ligand>
</feature>
<evidence type="ECO:0000255" key="1">
    <source>
        <dbReference type="HAMAP-Rule" id="MF_01227"/>
    </source>
</evidence>
<dbReference type="EC" id="6.3.4.2" evidence="1"/>
<dbReference type="EMBL" id="CP001020">
    <property type="protein sequence ID" value="ACJ19633.1"/>
    <property type="molecule type" value="Genomic_DNA"/>
</dbReference>
<dbReference type="RefSeq" id="WP_005770567.1">
    <property type="nucleotide sequence ID" value="NC_011528.1"/>
</dbReference>
<dbReference type="SMR" id="B6J4W8"/>
<dbReference type="MEROPS" id="C26.964"/>
<dbReference type="KEGG" id="cbc:CbuK_0329"/>
<dbReference type="HOGENOM" id="CLU_011675_5_0_6"/>
<dbReference type="UniPathway" id="UPA00159">
    <property type="reaction ID" value="UER00277"/>
</dbReference>
<dbReference type="GO" id="GO:0005829">
    <property type="term" value="C:cytosol"/>
    <property type="evidence" value="ECO:0007669"/>
    <property type="project" value="TreeGrafter"/>
</dbReference>
<dbReference type="GO" id="GO:0005524">
    <property type="term" value="F:ATP binding"/>
    <property type="evidence" value="ECO:0007669"/>
    <property type="project" value="UniProtKB-KW"/>
</dbReference>
<dbReference type="GO" id="GO:0003883">
    <property type="term" value="F:CTP synthase activity"/>
    <property type="evidence" value="ECO:0007669"/>
    <property type="project" value="UniProtKB-UniRule"/>
</dbReference>
<dbReference type="GO" id="GO:0004359">
    <property type="term" value="F:glutaminase activity"/>
    <property type="evidence" value="ECO:0007669"/>
    <property type="project" value="RHEA"/>
</dbReference>
<dbReference type="GO" id="GO:0042802">
    <property type="term" value="F:identical protein binding"/>
    <property type="evidence" value="ECO:0007669"/>
    <property type="project" value="TreeGrafter"/>
</dbReference>
<dbReference type="GO" id="GO:0046872">
    <property type="term" value="F:metal ion binding"/>
    <property type="evidence" value="ECO:0007669"/>
    <property type="project" value="UniProtKB-KW"/>
</dbReference>
<dbReference type="GO" id="GO:0044210">
    <property type="term" value="P:'de novo' CTP biosynthetic process"/>
    <property type="evidence" value="ECO:0007669"/>
    <property type="project" value="UniProtKB-UniRule"/>
</dbReference>
<dbReference type="GO" id="GO:0019856">
    <property type="term" value="P:pyrimidine nucleobase biosynthetic process"/>
    <property type="evidence" value="ECO:0007669"/>
    <property type="project" value="TreeGrafter"/>
</dbReference>
<dbReference type="CDD" id="cd03113">
    <property type="entry name" value="CTPS_N"/>
    <property type="match status" value="1"/>
</dbReference>
<dbReference type="CDD" id="cd01746">
    <property type="entry name" value="GATase1_CTP_Synthase"/>
    <property type="match status" value="1"/>
</dbReference>
<dbReference type="FunFam" id="3.40.50.300:FF:000009">
    <property type="entry name" value="CTP synthase"/>
    <property type="match status" value="1"/>
</dbReference>
<dbReference type="FunFam" id="3.40.50.880:FF:000002">
    <property type="entry name" value="CTP synthase"/>
    <property type="match status" value="1"/>
</dbReference>
<dbReference type="Gene3D" id="3.40.50.880">
    <property type="match status" value="1"/>
</dbReference>
<dbReference type="Gene3D" id="3.40.50.300">
    <property type="entry name" value="P-loop containing nucleotide triphosphate hydrolases"/>
    <property type="match status" value="1"/>
</dbReference>
<dbReference type="HAMAP" id="MF_01227">
    <property type="entry name" value="PyrG"/>
    <property type="match status" value="1"/>
</dbReference>
<dbReference type="InterPro" id="IPR029062">
    <property type="entry name" value="Class_I_gatase-like"/>
</dbReference>
<dbReference type="InterPro" id="IPR004468">
    <property type="entry name" value="CTP_synthase"/>
</dbReference>
<dbReference type="InterPro" id="IPR017456">
    <property type="entry name" value="CTP_synthase_N"/>
</dbReference>
<dbReference type="InterPro" id="IPR017926">
    <property type="entry name" value="GATASE"/>
</dbReference>
<dbReference type="InterPro" id="IPR033828">
    <property type="entry name" value="GATase1_CTP_Synthase"/>
</dbReference>
<dbReference type="InterPro" id="IPR027417">
    <property type="entry name" value="P-loop_NTPase"/>
</dbReference>
<dbReference type="NCBIfam" id="NF003792">
    <property type="entry name" value="PRK05380.1"/>
    <property type="match status" value="1"/>
</dbReference>
<dbReference type="NCBIfam" id="TIGR00337">
    <property type="entry name" value="PyrG"/>
    <property type="match status" value="1"/>
</dbReference>
<dbReference type="PANTHER" id="PTHR11550">
    <property type="entry name" value="CTP SYNTHASE"/>
    <property type="match status" value="1"/>
</dbReference>
<dbReference type="PANTHER" id="PTHR11550:SF0">
    <property type="entry name" value="CTP SYNTHASE-RELATED"/>
    <property type="match status" value="1"/>
</dbReference>
<dbReference type="Pfam" id="PF06418">
    <property type="entry name" value="CTP_synth_N"/>
    <property type="match status" value="1"/>
</dbReference>
<dbReference type="Pfam" id="PF00117">
    <property type="entry name" value="GATase"/>
    <property type="match status" value="1"/>
</dbReference>
<dbReference type="SUPFAM" id="SSF52317">
    <property type="entry name" value="Class I glutamine amidotransferase-like"/>
    <property type="match status" value="1"/>
</dbReference>
<dbReference type="SUPFAM" id="SSF52540">
    <property type="entry name" value="P-loop containing nucleoside triphosphate hydrolases"/>
    <property type="match status" value="1"/>
</dbReference>
<dbReference type="PROSITE" id="PS51273">
    <property type="entry name" value="GATASE_TYPE_1"/>
    <property type="match status" value="1"/>
</dbReference>
<reference key="1">
    <citation type="journal article" date="2009" name="Infect. Immun.">
        <title>Comparative genomics reveal extensive transposon-mediated genomic plasticity and diversity among potential effector proteins within the genus Coxiella.</title>
        <authorList>
            <person name="Beare P.A."/>
            <person name="Unsworth N."/>
            <person name="Andoh M."/>
            <person name="Voth D.E."/>
            <person name="Omsland A."/>
            <person name="Gilk S.D."/>
            <person name="Williams K.P."/>
            <person name="Sobral B.W."/>
            <person name="Kupko J.J. III"/>
            <person name="Porcella S.F."/>
            <person name="Samuel J.E."/>
            <person name="Heinzen R.A."/>
        </authorList>
    </citation>
    <scope>NUCLEOTIDE SEQUENCE [LARGE SCALE GENOMIC DNA]</scope>
    <source>
        <strain>CbuK_Q154</strain>
    </source>
</reference>
<sequence length="555" mass="61212">MTRYIFITGGVVSSLGKGITSASLGAILEAQGLTVTLLKLDPYINVDPGTMSPFQHGEVFVTEDGAETDLDLGHYERFVNATMTRKNNFTTGRVYADVIRKERRGDYLGGTIQVIPHITDEIKAKIREGADGADVALVEVGGTVGDIESLPFLEAIRQMRIELGDQQTLFIHLTLVPYVAVAGEIKTKPTQHSVKELRSIGIQPDILVCRSEQPLPDAERAKIALFTNVPEPSVISLSDVKSIYEIPLILRDQGLGNRVCEKLNIKATAADLDDWKKVVQAQKNPRHTVTVAVVGKYVDLEDSYKSLSEALIHAGIHTQTRVVIEYIDSEAIELHGTELLKKVDAILVPGGFGSRGIEGKILAAQYARENGIPYLGICLGMQIAIIEFARHKAQMENANSTEFDPKTPFPVVALVSEWMAKEGIIEKRKWGDDLGGTMRLGGQPCRLKIDSLARRLYGEDRVIERHRHRYEVNNDLIGELEKKGLVISGRSIDDRLVEMIELADHPWFVGCQFHPEFTSTPRKGHPLFIGFIKAGLAAKEAKKAVLAAPSQEKTD</sequence>
<name>PYRG_COXB1</name>
<accession>B6J4W8</accession>
<gene>
    <name evidence="1" type="primary">pyrG</name>
    <name type="ordered locus">CbuK_0329</name>
</gene>
<keyword id="KW-0067">ATP-binding</keyword>
<keyword id="KW-0315">Glutamine amidotransferase</keyword>
<keyword id="KW-0436">Ligase</keyword>
<keyword id="KW-0460">Magnesium</keyword>
<keyword id="KW-0479">Metal-binding</keyword>
<keyword id="KW-0547">Nucleotide-binding</keyword>
<keyword id="KW-0665">Pyrimidine biosynthesis</keyword>
<protein>
    <recommendedName>
        <fullName evidence="1">CTP synthase</fullName>
        <ecNumber evidence="1">6.3.4.2</ecNumber>
    </recommendedName>
    <alternativeName>
        <fullName evidence="1">Cytidine 5'-triphosphate synthase</fullName>
    </alternativeName>
    <alternativeName>
        <fullName evidence="1">Cytidine triphosphate synthetase</fullName>
        <shortName evidence="1">CTP synthetase</shortName>
        <shortName evidence="1">CTPS</shortName>
    </alternativeName>
    <alternativeName>
        <fullName evidence="1">UTP--ammonia ligase</fullName>
    </alternativeName>
</protein>
<proteinExistence type="inferred from homology"/>
<organism>
    <name type="scientific">Coxiella burnetii (strain CbuK_Q154)</name>
    <name type="common">Coxiella burnetii (strain Q154)</name>
    <dbReference type="NCBI Taxonomy" id="434924"/>
    <lineage>
        <taxon>Bacteria</taxon>
        <taxon>Pseudomonadati</taxon>
        <taxon>Pseudomonadota</taxon>
        <taxon>Gammaproteobacteria</taxon>
        <taxon>Legionellales</taxon>
        <taxon>Coxiellaceae</taxon>
        <taxon>Coxiella</taxon>
    </lineage>
</organism>
<comment type="function">
    <text evidence="1">Catalyzes the ATP-dependent amination of UTP to CTP with either L-glutamine or ammonia as the source of nitrogen. Regulates intracellular CTP levels through interactions with the four ribonucleotide triphosphates.</text>
</comment>
<comment type="catalytic activity">
    <reaction evidence="1">
        <text>UTP + L-glutamine + ATP + H2O = CTP + L-glutamate + ADP + phosphate + 2 H(+)</text>
        <dbReference type="Rhea" id="RHEA:26426"/>
        <dbReference type="ChEBI" id="CHEBI:15377"/>
        <dbReference type="ChEBI" id="CHEBI:15378"/>
        <dbReference type="ChEBI" id="CHEBI:29985"/>
        <dbReference type="ChEBI" id="CHEBI:30616"/>
        <dbReference type="ChEBI" id="CHEBI:37563"/>
        <dbReference type="ChEBI" id="CHEBI:43474"/>
        <dbReference type="ChEBI" id="CHEBI:46398"/>
        <dbReference type="ChEBI" id="CHEBI:58359"/>
        <dbReference type="ChEBI" id="CHEBI:456216"/>
        <dbReference type="EC" id="6.3.4.2"/>
    </reaction>
</comment>
<comment type="catalytic activity">
    <reaction evidence="1">
        <text>L-glutamine + H2O = L-glutamate + NH4(+)</text>
        <dbReference type="Rhea" id="RHEA:15889"/>
        <dbReference type="ChEBI" id="CHEBI:15377"/>
        <dbReference type="ChEBI" id="CHEBI:28938"/>
        <dbReference type="ChEBI" id="CHEBI:29985"/>
        <dbReference type="ChEBI" id="CHEBI:58359"/>
    </reaction>
</comment>
<comment type="catalytic activity">
    <reaction evidence="1">
        <text>UTP + NH4(+) + ATP = CTP + ADP + phosphate + 2 H(+)</text>
        <dbReference type="Rhea" id="RHEA:16597"/>
        <dbReference type="ChEBI" id="CHEBI:15378"/>
        <dbReference type="ChEBI" id="CHEBI:28938"/>
        <dbReference type="ChEBI" id="CHEBI:30616"/>
        <dbReference type="ChEBI" id="CHEBI:37563"/>
        <dbReference type="ChEBI" id="CHEBI:43474"/>
        <dbReference type="ChEBI" id="CHEBI:46398"/>
        <dbReference type="ChEBI" id="CHEBI:456216"/>
    </reaction>
</comment>
<comment type="activity regulation">
    <text evidence="1">Allosterically activated by GTP, when glutamine is the substrate; GTP has no effect on the reaction when ammonia is the substrate. The allosteric effector GTP functions by stabilizing the protein conformation that binds the tetrahedral intermediate(s) formed during glutamine hydrolysis. Inhibited by the product CTP, via allosteric rather than competitive inhibition.</text>
</comment>
<comment type="pathway">
    <text evidence="1">Pyrimidine metabolism; CTP biosynthesis via de novo pathway; CTP from UDP: step 2/2.</text>
</comment>
<comment type="subunit">
    <text evidence="1">Homotetramer.</text>
</comment>
<comment type="miscellaneous">
    <text evidence="1">CTPSs have evolved a hybrid strategy for distinguishing between UTP and CTP. The overlapping regions of the product feedback inhibitory and substrate sites recognize a common feature in both compounds, the triphosphate moiety. To differentiate isosteric substrate and product pyrimidine rings, an additional pocket far from the expected kinase/ligase catalytic site, specifically recognizes the cytosine and ribose portions of the product inhibitor.</text>
</comment>
<comment type="similarity">
    <text evidence="1">Belongs to the CTP synthase family.</text>
</comment>